<comment type="function">
    <text>Involved in oxygen transport from the lung to the various peripheral tissues.</text>
</comment>
<comment type="subunit">
    <text>Heterotetramer of two alpha chains and two beta chains.</text>
</comment>
<comment type="tissue specificity">
    <text>Red blood cells.</text>
</comment>
<comment type="similarity">
    <text evidence="3">Belongs to the globin family.</text>
</comment>
<protein>
    <recommendedName>
        <fullName>Hemoglobin subunit beta</fullName>
    </recommendedName>
    <alternativeName>
        <fullName>Beta-globin</fullName>
    </alternativeName>
    <alternativeName>
        <fullName>Hemoglobin beta chain</fullName>
    </alternativeName>
</protein>
<dbReference type="EMBL" id="AY279117">
    <property type="protein sequence ID" value="AAQ18225.1"/>
    <property type="molecule type" value="Genomic_DNA"/>
</dbReference>
<dbReference type="PIR" id="A90034">
    <property type="entry name" value="HBMKK"/>
</dbReference>
<dbReference type="SMR" id="Q6WN22"/>
<dbReference type="GO" id="GO:0072562">
    <property type="term" value="C:blood microparticle"/>
    <property type="evidence" value="ECO:0007669"/>
    <property type="project" value="TreeGrafter"/>
</dbReference>
<dbReference type="GO" id="GO:0031838">
    <property type="term" value="C:haptoglobin-hemoglobin complex"/>
    <property type="evidence" value="ECO:0007669"/>
    <property type="project" value="TreeGrafter"/>
</dbReference>
<dbReference type="GO" id="GO:0005833">
    <property type="term" value="C:hemoglobin complex"/>
    <property type="evidence" value="ECO:0007669"/>
    <property type="project" value="InterPro"/>
</dbReference>
<dbReference type="GO" id="GO:0031720">
    <property type="term" value="F:haptoglobin binding"/>
    <property type="evidence" value="ECO:0007669"/>
    <property type="project" value="TreeGrafter"/>
</dbReference>
<dbReference type="GO" id="GO:0020037">
    <property type="term" value="F:heme binding"/>
    <property type="evidence" value="ECO:0007669"/>
    <property type="project" value="InterPro"/>
</dbReference>
<dbReference type="GO" id="GO:0031721">
    <property type="term" value="F:hemoglobin alpha binding"/>
    <property type="evidence" value="ECO:0007669"/>
    <property type="project" value="TreeGrafter"/>
</dbReference>
<dbReference type="GO" id="GO:0046872">
    <property type="term" value="F:metal ion binding"/>
    <property type="evidence" value="ECO:0007669"/>
    <property type="project" value="UniProtKB-KW"/>
</dbReference>
<dbReference type="GO" id="GO:0043177">
    <property type="term" value="F:organic acid binding"/>
    <property type="evidence" value="ECO:0007669"/>
    <property type="project" value="TreeGrafter"/>
</dbReference>
<dbReference type="GO" id="GO:0019825">
    <property type="term" value="F:oxygen binding"/>
    <property type="evidence" value="ECO:0007669"/>
    <property type="project" value="InterPro"/>
</dbReference>
<dbReference type="GO" id="GO:0005344">
    <property type="term" value="F:oxygen carrier activity"/>
    <property type="evidence" value="ECO:0007669"/>
    <property type="project" value="UniProtKB-KW"/>
</dbReference>
<dbReference type="GO" id="GO:0004601">
    <property type="term" value="F:peroxidase activity"/>
    <property type="evidence" value="ECO:0007669"/>
    <property type="project" value="TreeGrafter"/>
</dbReference>
<dbReference type="GO" id="GO:0042744">
    <property type="term" value="P:hydrogen peroxide catabolic process"/>
    <property type="evidence" value="ECO:0007669"/>
    <property type="project" value="TreeGrafter"/>
</dbReference>
<dbReference type="CDD" id="cd08925">
    <property type="entry name" value="Hb-beta-like"/>
    <property type="match status" value="1"/>
</dbReference>
<dbReference type="FunFam" id="1.10.490.10:FF:000001">
    <property type="entry name" value="Hemoglobin subunit beta"/>
    <property type="match status" value="1"/>
</dbReference>
<dbReference type="Gene3D" id="1.10.490.10">
    <property type="entry name" value="Globins"/>
    <property type="match status" value="1"/>
</dbReference>
<dbReference type="InterPro" id="IPR000971">
    <property type="entry name" value="Globin"/>
</dbReference>
<dbReference type="InterPro" id="IPR009050">
    <property type="entry name" value="Globin-like_sf"/>
</dbReference>
<dbReference type="InterPro" id="IPR012292">
    <property type="entry name" value="Globin/Proto"/>
</dbReference>
<dbReference type="InterPro" id="IPR002337">
    <property type="entry name" value="Hemoglobin_b"/>
</dbReference>
<dbReference type="InterPro" id="IPR050056">
    <property type="entry name" value="Hemoglobin_oxygen_transport"/>
</dbReference>
<dbReference type="PANTHER" id="PTHR11442">
    <property type="entry name" value="HEMOGLOBIN FAMILY MEMBER"/>
    <property type="match status" value="1"/>
</dbReference>
<dbReference type="PANTHER" id="PTHR11442:SF42">
    <property type="entry name" value="HEMOGLOBIN SUBUNIT BETA"/>
    <property type="match status" value="1"/>
</dbReference>
<dbReference type="Pfam" id="PF00042">
    <property type="entry name" value="Globin"/>
    <property type="match status" value="1"/>
</dbReference>
<dbReference type="PRINTS" id="PR00814">
    <property type="entry name" value="BETAHAEM"/>
</dbReference>
<dbReference type="SUPFAM" id="SSF46458">
    <property type="entry name" value="Globin-like"/>
    <property type="match status" value="1"/>
</dbReference>
<dbReference type="PROSITE" id="PS01033">
    <property type="entry name" value="GLOBIN"/>
    <property type="match status" value="1"/>
</dbReference>
<proteinExistence type="evidence at protein level"/>
<accession>Q6WN22</accession>
<accession>P02034</accession>
<feature type="initiator methionine" description="Removed" evidence="1 4">
    <location>
        <position position="1"/>
    </location>
</feature>
<feature type="chain" id="PRO_0000052885" description="Hemoglobin subunit beta">
    <location>
        <begin position="2"/>
        <end position="147"/>
    </location>
</feature>
<feature type="domain" description="Globin" evidence="3">
    <location>
        <begin position="3"/>
        <end position="147"/>
    </location>
</feature>
<feature type="binding site" description="distal binding residue">
    <location>
        <position position="64"/>
    </location>
    <ligand>
        <name>heme b</name>
        <dbReference type="ChEBI" id="CHEBI:60344"/>
    </ligand>
    <ligandPart>
        <name>Fe</name>
        <dbReference type="ChEBI" id="CHEBI:18248"/>
    </ligandPart>
</feature>
<feature type="binding site" description="proximal binding residue">
    <location>
        <position position="93"/>
    </location>
    <ligand>
        <name>heme b</name>
        <dbReference type="ChEBI" id="CHEBI:60344"/>
    </ligand>
    <ligandPart>
        <name>Fe</name>
        <dbReference type="ChEBI" id="CHEBI:18248"/>
    </ligandPart>
</feature>
<feature type="modified residue" description="N-acetylvaline" evidence="1">
    <location>
        <position position="2"/>
    </location>
</feature>
<feature type="modified residue" description="Phosphothreonine" evidence="2">
    <location>
        <position position="13"/>
    </location>
</feature>
<feature type="modified residue" description="Phosphoserine" evidence="2">
    <location>
        <position position="45"/>
    </location>
</feature>
<feature type="modified residue" description="N6-acetyllysine" evidence="2">
    <location>
        <position position="60"/>
    </location>
</feature>
<feature type="modified residue" description="N6-acetyllysine" evidence="2">
    <location>
        <position position="83"/>
    </location>
</feature>
<feature type="modified residue" description="S-nitrosocysteine" evidence="2">
    <location>
        <position position="94"/>
    </location>
</feature>
<feature type="modified residue" description="N6-acetyllysine" evidence="2">
    <location>
        <position position="145"/>
    </location>
</feature>
<feature type="sequence conflict" description="In Ref. 2; AA sequence." evidence="5" ref="2">
    <original>S</original>
    <variation>A</variation>
    <location>
        <position position="10"/>
    </location>
</feature>
<feature type="sequence conflict" description="In Ref. 2; AA sequence." evidence="5" ref="2">
    <original>T</original>
    <variation>A</variation>
    <location>
        <position position="14"/>
    </location>
</feature>
<feature type="sequence conflict" description="In Ref. 2; AA sequence." evidence="5" ref="2">
    <original>S</original>
    <variation>T</variation>
    <location>
        <position position="51"/>
    </location>
</feature>
<feature type="sequence conflict" description="In Ref. 2; AA sequence." evidence="5" ref="2">
    <original>G</original>
    <variation>S</variation>
    <location>
        <position position="57"/>
    </location>
</feature>
<keyword id="KW-0007">Acetylation</keyword>
<keyword id="KW-0903">Direct protein sequencing</keyword>
<keyword id="KW-0349">Heme</keyword>
<keyword id="KW-0408">Iron</keyword>
<keyword id="KW-0479">Metal-binding</keyword>
<keyword id="KW-0561">Oxygen transport</keyword>
<keyword id="KW-0597">Phosphoprotein</keyword>
<keyword id="KW-0702">S-nitrosylation</keyword>
<keyword id="KW-0813">Transport</keyword>
<name>HBB_ATEPA</name>
<sequence length="147" mass="16046">MVHLTGEEKSAVTTLWGKVNVDEVGGEALGRLLVVYPWTQRFFESFGDLSSPDAVMGNPKVKAHGKKVLGAFSDGLAHLDNLKGTFAQLSELHCDKLHVDPENFRLLGNVLVCVLAHHFGKEFTPQLQAAYQKVVAGVANALAHKYH</sequence>
<gene>
    <name type="primary">HBB</name>
</gene>
<organism>
    <name type="scientific">Ateles paniscus</name>
    <name type="common">Black spider monkey</name>
    <name type="synonym">Red-faced black spider monkey</name>
    <dbReference type="NCBI Taxonomy" id="9510"/>
    <lineage>
        <taxon>Eukaryota</taxon>
        <taxon>Metazoa</taxon>
        <taxon>Chordata</taxon>
        <taxon>Craniata</taxon>
        <taxon>Vertebrata</taxon>
        <taxon>Euteleostomi</taxon>
        <taxon>Mammalia</taxon>
        <taxon>Eutheria</taxon>
        <taxon>Euarchontoglires</taxon>
        <taxon>Primates</taxon>
        <taxon>Haplorrhini</taxon>
        <taxon>Platyrrhini</taxon>
        <taxon>Atelidae</taxon>
        <taxon>Atelinae</taxon>
        <taxon>Ateles</taxon>
    </lineage>
</organism>
<evidence type="ECO:0000250" key="1">
    <source>
        <dbReference type="UniProtKB" id="P02086"/>
    </source>
</evidence>
<evidence type="ECO:0000250" key="2">
    <source>
        <dbReference type="UniProtKB" id="P68871"/>
    </source>
</evidence>
<evidence type="ECO:0000255" key="3">
    <source>
        <dbReference type="PROSITE-ProRule" id="PRU00238"/>
    </source>
</evidence>
<evidence type="ECO:0000269" key="4">
    <source>
    </source>
</evidence>
<evidence type="ECO:0000305" key="5"/>
<reference key="1">
    <citation type="submission" date="2003-04" db="EMBL/GenBank/DDBJ databases">
        <title>The molecular evolution of the primate beta globin gene: an evaluation of gene conversion and phylogeny and an analysis of phylogenetic footprints in noncoding DNA.</title>
        <authorList>
            <person name="Prychitko T.M."/>
            <person name="Goodman M."/>
            <person name="Johnson R.M."/>
        </authorList>
    </citation>
    <scope>NUCLEOTIDE SEQUENCE [GENOMIC DNA]</scope>
</reference>
<reference key="2">
    <citation type="journal article" date="1969" name="Ann. N. Y. Acad. Sci.">
        <title>The structure and biosynthesis of hemoglobins A and A2 in the new world primate Ateles paniscus: a preliminary account.</title>
        <authorList>
            <person name="Boyer S.H."/>
            <person name="Crosby E.F."/>
            <person name="Fuller G.F."/>
            <person name="Noyes A.N."/>
            <person name="Adams J.G."/>
        </authorList>
    </citation>
    <scope>PROTEIN SEQUENCE OF 2-147</scope>
</reference>